<evidence type="ECO:0000255" key="1">
    <source>
        <dbReference type="HAMAP-Rule" id="MF_01633"/>
    </source>
</evidence>
<feature type="chain" id="PRO_0000336919" description="7-cyano-7-deazaguanine synthase">
    <location>
        <begin position="1"/>
        <end position="248"/>
    </location>
</feature>
<feature type="binding site" evidence="1">
    <location>
        <begin position="22"/>
        <end position="32"/>
    </location>
    <ligand>
        <name>ATP</name>
        <dbReference type="ChEBI" id="CHEBI:30616"/>
    </ligand>
</feature>
<feature type="binding site" evidence="1">
    <location>
        <position position="216"/>
    </location>
    <ligand>
        <name>Zn(2+)</name>
        <dbReference type="ChEBI" id="CHEBI:29105"/>
    </ligand>
</feature>
<feature type="binding site" evidence="1">
    <location>
        <position position="225"/>
    </location>
    <ligand>
        <name>Zn(2+)</name>
        <dbReference type="ChEBI" id="CHEBI:29105"/>
    </ligand>
</feature>
<feature type="binding site" evidence="1">
    <location>
        <position position="228"/>
    </location>
    <ligand>
        <name>Zn(2+)</name>
        <dbReference type="ChEBI" id="CHEBI:29105"/>
    </ligand>
</feature>
<feature type="binding site" evidence="1">
    <location>
        <position position="231"/>
    </location>
    <ligand>
        <name>Zn(2+)</name>
        <dbReference type="ChEBI" id="CHEBI:29105"/>
    </ligand>
</feature>
<protein>
    <recommendedName>
        <fullName evidence="1">7-cyano-7-deazaguanine synthase</fullName>
        <ecNumber evidence="1">6.3.4.20</ecNumber>
    </recommendedName>
    <alternativeName>
        <fullName evidence="1">7-cyano-7-carbaguanine synthase</fullName>
    </alternativeName>
    <alternativeName>
        <fullName evidence="1">PreQ(0) synthase</fullName>
    </alternativeName>
    <alternativeName>
        <fullName evidence="1">Queuosine biosynthesis protein QueC</fullName>
    </alternativeName>
</protein>
<sequence length="248" mass="26815">MVSILDSSFKSKTEKKGAIVLLSGGLDSTTCLYLAAKDFGYPKNKKLPLLALSFDYSQKHKIELTKSKKIAKTLGIKHVIQKLDPGFFLGSSLTESKIKVRKNAKSLFSGDETEIPNTYVPGRNILFLSFALSLAEGHGYDSIYIGVNALDYSGYPDCRPEFIDSFQKMANLGTKKGVSGTGDSIQIKTPLLHLGKKEIIELGMSVGAPLGLTHSCYDPVSGKPCGKCDSCILRAKGFLEVGLKDPAL</sequence>
<dbReference type="EC" id="6.3.4.20" evidence="1"/>
<dbReference type="EMBL" id="CP000777">
    <property type="protein sequence ID" value="ABZ92716.1"/>
    <property type="molecule type" value="Genomic_DNA"/>
</dbReference>
<dbReference type="RefSeq" id="WP_012387209.1">
    <property type="nucleotide sequence ID" value="NC_010842.1"/>
</dbReference>
<dbReference type="SMR" id="B0S9S9"/>
<dbReference type="KEGG" id="lbf:LBF_0170"/>
<dbReference type="HOGENOM" id="CLU_081854_1_1_12"/>
<dbReference type="UniPathway" id="UPA00391"/>
<dbReference type="GO" id="GO:0005524">
    <property type="term" value="F:ATP binding"/>
    <property type="evidence" value="ECO:0007669"/>
    <property type="project" value="UniProtKB-UniRule"/>
</dbReference>
<dbReference type="GO" id="GO:0016879">
    <property type="term" value="F:ligase activity, forming carbon-nitrogen bonds"/>
    <property type="evidence" value="ECO:0007669"/>
    <property type="project" value="UniProtKB-UniRule"/>
</dbReference>
<dbReference type="GO" id="GO:0008270">
    <property type="term" value="F:zinc ion binding"/>
    <property type="evidence" value="ECO:0007669"/>
    <property type="project" value="UniProtKB-UniRule"/>
</dbReference>
<dbReference type="GO" id="GO:0008616">
    <property type="term" value="P:queuosine biosynthetic process"/>
    <property type="evidence" value="ECO:0007669"/>
    <property type="project" value="UniProtKB-UniRule"/>
</dbReference>
<dbReference type="CDD" id="cd01995">
    <property type="entry name" value="QueC-like"/>
    <property type="match status" value="1"/>
</dbReference>
<dbReference type="Gene3D" id="3.40.50.620">
    <property type="entry name" value="HUPs"/>
    <property type="match status" value="1"/>
</dbReference>
<dbReference type="HAMAP" id="MF_01633">
    <property type="entry name" value="QueC"/>
    <property type="match status" value="1"/>
</dbReference>
<dbReference type="InterPro" id="IPR018317">
    <property type="entry name" value="QueC"/>
</dbReference>
<dbReference type="InterPro" id="IPR014729">
    <property type="entry name" value="Rossmann-like_a/b/a_fold"/>
</dbReference>
<dbReference type="NCBIfam" id="TIGR00364">
    <property type="entry name" value="7-cyano-7-deazaguanine synthase QueC"/>
    <property type="match status" value="1"/>
</dbReference>
<dbReference type="PANTHER" id="PTHR42914">
    <property type="entry name" value="7-CYANO-7-DEAZAGUANINE SYNTHASE"/>
    <property type="match status" value="1"/>
</dbReference>
<dbReference type="PANTHER" id="PTHR42914:SF1">
    <property type="entry name" value="7-CYANO-7-DEAZAGUANINE SYNTHASE"/>
    <property type="match status" value="1"/>
</dbReference>
<dbReference type="Pfam" id="PF06508">
    <property type="entry name" value="QueC"/>
    <property type="match status" value="1"/>
</dbReference>
<dbReference type="PIRSF" id="PIRSF006293">
    <property type="entry name" value="ExsB"/>
    <property type="match status" value="1"/>
</dbReference>
<dbReference type="SUPFAM" id="SSF52402">
    <property type="entry name" value="Adenine nucleotide alpha hydrolases-like"/>
    <property type="match status" value="1"/>
</dbReference>
<reference key="1">
    <citation type="journal article" date="2008" name="PLoS ONE">
        <title>Genome sequence of the saprophyte Leptospira biflexa provides insights into the evolution of Leptospira and the pathogenesis of leptospirosis.</title>
        <authorList>
            <person name="Picardeau M."/>
            <person name="Bulach D.M."/>
            <person name="Bouchier C."/>
            <person name="Zuerner R.L."/>
            <person name="Zidane N."/>
            <person name="Wilson P.J."/>
            <person name="Creno S."/>
            <person name="Kuczek E.S."/>
            <person name="Bommezzadri S."/>
            <person name="Davis J.C."/>
            <person name="McGrath A."/>
            <person name="Johnson M.J."/>
            <person name="Boursaux-Eude C."/>
            <person name="Seemann T."/>
            <person name="Rouy Z."/>
            <person name="Coppel R.L."/>
            <person name="Rood J.I."/>
            <person name="Lajus A."/>
            <person name="Davies J.K."/>
            <person name="Medigue C."/>
            <person name="Adler B."/>
        </authorList>
    </citation>
    <scope>NUCLEOTIDE SEQUENCE [LARGE SCALE GENOMIC DNA]</scope>
    <source>
        <strain>Patoc 1 / Ames</strain>
    </source>
</reference>
<gene>
    <name evidence="1" type="primary">queC</name>
    <name type="ordered locus">LBF_0170</name>
</gene>
<name>QUEC_LEPBA</name>
<accession>B0S9S9</accession>
<comment type="function">
    <text evidence="1">Catalyzes the ATP-dependent conversion of 7-carboxy-7-deazaguanine (CDG) to 7-cyano-7-deazaguanine (preQ(0)).</text>
</comment>
<comment type="catalytic activity">
    <reaction evidence="1">
        <text>7-carboxy-7-deazaguanine + NH4(+) + ATP = 7-cyano-7-deazaguanine + ADP + phosphate + H2O + H(+)</text>
        <dbReference type="Rhea" id="RHEA:27982"/>
        <dbReference type="ChEBI" id="CHEBI:15377"/>
        <dbReference type="ChEBI" id="CHEBI:15378"/>
        <dbReference type="ChEBI" id="CHEBI:28938"/>
        <dbReference type="ChEBI" id="CHEBI:30616"/>
        <dbReference type="ChEBI" id="CHEBI:43474"/>
        <dbReference type="ChEBI" id="CHEBI:45075"/>
        <dbReference type="ChEBI" id="CHEBI:61036"/>
        <dbReference type="ChEBI" id="CHEBI:456216"/>
        <dbReference type="EC" id="6.3.4.20"/>
    </reaction>
</comment>
<comment type="cofactor">
    <cofactor evidence="1">
        <name>Zn(2+)</name>
        <dbReference type="ChEBI" id="CHEBI:29105"/>
    </cofactor>
    <text evidence="1">Binds 1 zinc ion per subunit.</text>
</comment>
<comment type="pathway">
    <text evidence="1">Purine metabolism; 7-cyano-7-deazaguanine biosynthesis.</text>
</comment>
<comment type="similarity">
    <text evidence="1">Belongs to the QueC family.</text>
</comment>
<organism>
    <name type="scientific">Leptospira biflexa serovar Patoc (strain Patoc 1 / Ames)</name>
    <dbReference type="NCBI Taxonomy" id="355278"/>
    <lineage>
        <taxon>Bacteria</taxon>
        <taxon>Pseudomonadati</taxon>
        <taxon>Spirochaetota</taxon>
        <taxon>Spirochaetia</taxon>
        <taxon>Leptospirales</taxon>
        <taxon>Leptospiraceae</taxon>
        <taxon>Leptospira</taxon>
    </lineage>
</organism>
<keyword id="KW-0067">ATP-binding</keyword>
<keyword id="KW-0436">Ligase</keyword>
<keyword id="KW-0479">Metal-binding</keyword>
<keyword id="KW-0547">Nucleotide-binding</keyword>
<keyword id="KW-0671">Queuosine biosynthesis</keyword>
<keyword id="KW-0862">Zinc</keyword>
<proteinExistence type="inferred from homology"/>